<accession>A0PWD1</accession>
<sequence>MDLFEYQAKGLFAKHNVPTTPGRVTDTAEGARAIATEIGHPVMVKAQVKIGGRGKAGGVKYAATPDDAYEHANNILGLDIKGHVVKKLLVAEASDIAEEYYISFLLDRANRTYLAMCSVEGGMEIEEVAATKPDRLAKVPVDAAKGVDLAFARSIAEQGHLPAEVLDAAAVTISKLWDLFVGEDATLVEVNPLVRTPDDQILALDGKVTLDANADFRHPDHVEFEDRAATDPLELKAKEHDLNYVKLDGQVGIIGNGAGLVMSTLDVVAYAGEKHGGVKPANFLDIGGGASAEVMAAGLDVVLGDSQVKSVFVNVFGGITSCDAVATGIVKALEILGAEANKPLVVRLDGNNVEEGRRILTDANHPLVTLVPTMDEAADKAAELASA</sequence>
<keyword id="KW-0067">ATP-binding</keyword>
<keyword id="KW-0436">Ligase</keyword>
<keyword id="KW-0460">Magnesium</keyword>
<keyword id="KW-0479">Metal-binding</keyword>
<keyword id="KW-0547">Nucleotide-binding</keyword>
<keyword id="KW-0816">Tricarboxylic acid cycle</keyword>
<organism>
    <name type="scientific">Mycobacterium ulcerans (strain Agy99)</name>
    <dbReference type="NCBI Taxonomy" id="362242"/>
    <lineage>
        <taxon>Bacteria</taxon>
        <taxon>Bacillati</taxon>
        <taxon>Actinomycetota</taxon>
        <taxon>Actinomycetes</taxon>
        <taxon>Mycobacteriales</taxon>
        <taxon>Mycobacteriaceae</taxon>
        <taxon>Mycobacterium</taxon>
        <taxon>Mycobacterium ulcerans group</taxon>
    </lineage>
</organism>
<name>SUCC_MYCUA</name>
<gene>
    <name evidence="1" type="primary">sucC</name>
    <name type="ordered locus">MUL_4720</name>
</gene>
<feature type="chain" id="PRO_1000082133" description="Succinate--CoA ligase [ADP-forming] subunit beta">
    <location>
        <begin position="1"/>
        <end position="387"/>
    </location>
</feature>
<feature type="domain" description="ATP-grasp" evidence="1">
    <location>
        <begin position="9"/>
        <end position="236"/>
    </location>
</feature>
<feature type="binding site" evidence="1">
    <location>
        <position position="45"/>
    </location>
    <ligand>
        <name>ATP</name>
        <dbReference type="ChEBI" id="CHEBI:30616"/>
    </ligand>
</feature>
<feature type="binding site" evidence="1">
    <location>
        <begin position="52"/>
        <end position="54"/>
    </location>
    <ligand>
        <name>ATP</name>
        <dbReference type="ChEBI" id="CHEBI:30616"/>
    </ligand>
</feature>
<feature type="binding site" evidence="1">
    <location>
        <position position="94"/>
    </location>
    <ligand>
        <name>ATP</name>
        <dbReference type="ChEBI" id="CHEBI:30616"/>
    </ligand>
</feature>
<feature type="binding site" evidence="1">
    <location>
        <position position="99"/>
    </location>
    <ligand>
        <name>ATP</name>
        <dbReference type="ChEBI" id="CHEBI:30616"/>
    </ligand>
</feature>
<feature type="binding site" evidence="1">
    <location>
        <position position="191"/>
    </location>
    <ligand>
        <name>Mg(2+)</name>
        <dbReference type="ChEBI" id="CHEBI:18420"/>
    </ligand>
</feature>
<feature type="binding site" evidence="1">
    <location>
        <position position="205"/>
    </location>
    <ligand>
        <name>Mg(2+)</name>
        <dbReference type="ChEBI" id="CHEBI:18420"/>
    </ligand>
</feature>
<feature type="binding site" evidence="1">
    <location>
        <position position="256"/>
    </location>
    <ligand>
        <name>substrate</name>
        <note>ligand shared with subunit alpha</note>
    </ligand>
</feature>
<feature type="binding site" evidence="1">
    <location>
        <begin position="318"/>
        <end position="320"/>
    </location>
    <ligand>
        <name>substrate</name>
        <note>ligand shared with subunit alpha</note>
    </ligand>
</feature>
<dbReference type="EC" id="6.2.1.5" evidence="1"/>
<dbReference type="EMBL" id="CP000325">
    <property type="protein sequence ID" value="ABL06650.1"/>
    <property type="molecule type" value="Genomic_DNA"/>
</dbReference>
<dbReference type="RefSeq" id="WP_011742245.1">
    <property type="nucleotide sequence ID" value="NC_008611.1"/>
</dbReference>
<dbReference type="SMR" id="A0PWD1"/>
<dbReference type="KEGG" id="mul:MUL_4720"/>
<dbReference type="eggNOG" id="COG0045">
    <property type="taxonomic scope" value="Bacteria"/>
</dbReference>
<dbReference type="HOGENOM" id="CLU_037430_4_0_11"/>
<dbReference type="UniPathway" id="UPA00223">
    <property type="reaction ID" value="UER00999"/>
</dbReference>
<dbReference type="Proteomes" id="UP000000765">
    <property type="component" value="Chromosome"/>
</dbReference>
<dbReference type="GO" id="GO:0005829">
    <property type="term" value="C:cytosol"/>
    <property type="evidence" value="ECO:0007669"/>
    <property type="project" value="TreeGrafter"/>
</dbReference>
<dbReference type="GO" id="GO:0042709">
    <property type="term" value="C:succinate-CoA ligase complex"/>
    <property type="evidence" value="ECO:0007669"/>
    <property type="project" value="TreeGrafter"/>
</dbReference>
<dbReference type="GO" id="GO:0005524">
    <property type="term" value="F:ATP binding"/>
    <property type="evidence" value="ECO:0007669"/>
    <property type="project" value="UniProtKB-UniRule"/>
</dbReference>
<dbReference type="GO" id="GO:0000287">
    <property type="term" value="F:magnesium ion binding"/>
    <property type="evidence" value="ECO:0007669"/>
    <property type="project" value="UniProtKB-UniRule"/>
</dbReference>
<dbReference type="GO" id="GO:0004775">
    <property type="term" value="F:succinate-CoA ligase (ADP-forming) activity"/>
    <property type="evidence" value="ECO:0007669"/>
    <property type="project" value="UniProtKB-UniRule"/>
</dbReference>
<dbReference type="GO" id="GO:0004776">
    <property type="term" value="F:succinate-CoA ligase (GDP-forming) activity"/>
    <property type="evidence" value="ECO:0007669"/>
    <property type="project" value="RHEA"/>
</dbReference>
<dbReference type="GO" id="GO:0006104">
    <property type="term" value="P:succinyl-CoA metabolic process"/>
    <property type="evidence" value="ECO:0007669"/>
    <property type="project" value="TreeGrafter"/>
</dbReference>
<dbReference type="GO" id="GO:0006099">
    <property type="term" value="P:tricarboxylic acid cycle"/>
    <property type="evidence" value="ECO:0007669"/>
    <property type="project" value="UniProtKB-UniRule"/>
</dbReference>
<dbReference type="FunFam" id="3.30.1490.20:FF:000014">
    <property type="entry name" value="Succinate--CoA ligase [ADP-forming] subunit beta"/>
    <property type="match status" value="1"/>
</dbReference>
<dbReference type="FunFam" id="3.30.470.20:FF:000002">
    <property type="entry name" value="Succinate--CoA ligase [ADP-forming] subunit beta"/>
    <property type="match status" value="1"/>
</dbReference>
<dbReference type="FunFam" id="3.40.50.261:FF:000007">
    <property type="entry name" value="Succinate--CoA ligase [ADP-forming] subunit beta"/>
    <property type="match status" value="1"/>
</dbReference>
<dbReference type="Gene3D" id="3.30.1490.20">
    <property type="entry name" value="ATP-grasp fold, A domain"/>
    <property type="match status" value="1"/>
</dbReference>
<dbReference type="Gene3D" id="3.30.470.20">
    <property type="entry name" value="ATP-grasp fold, B domain"/>
    <property type="match status" value="1"/>
</dbReference>
<dbReference type="Gene3D" id="3.40.50.261">
    <property type="entry name" value="Succinyl-CoA synthetase domains"/>
    <property type="match status" value="1"/>
</dbReference>
<dbReference type="HAMAP" id="MF_00558">
    <property type="entry name" value="Succ_CoA_beta"/>
    <property type="match status" value="1"/>
</dbReference>
<dbReference type="InterPro" id="IPR011761">
    <property type="entry name" value="ATP-grasp"/>
</dbReference>
<dbReference type="InterPro" id="IPR013650">
    <property type="entry name" value="ATP-grasp_succ-CoA_synth-type"/>
</dbReference>
<dbReference type="InterPro" id="IPR013815">
    <property type="entry name" value="ATP_grasp_subdomain_1"/>
</dbReference>
<dbReference type="InterPro" id="IPR017866">
    <property type="entry name" value="Succ-CoA_synthase_bsu_CS"/>
</dbReference>
<dbReference type="InterPro" id="IPR005811">
    <property type="entry name" value="SUCC_ACL_C"/>
</dbReference>
<dbReference type="InterPro" id="IPR005809">
    <property type="entry name" value="Succ_CoA_ligase-like_bsu"/>
</dbReference>
<dbReference type="InterPro" id="IPR016102">
    <property type="entry name" value="Succinyl-CoA_synth-like"/>
</dbReference>
<dbReference type="NCBIfam" id="NF001913">
    <property type="entry name" value="PRK00696.1"/>
    <property type="match status" value="1"/>
</dbReference>
<dbReference type="NCBIfam" id="TIGR01016">
    <property type="entry name" value="sucCoAbeta"/>
    <property type="match status" value="1"/>
</dbReference>
<dbReference type="PANTHER" id="PTHR11815:SF10">
    <property type="entry name" value="SUCCINATE--COA LIGASE [GDP-FORMING] SUBUNIT BETA, MITOCHONDRIAL"/>
    <property type="match status" value="1"/>
</dbReference>
<dbReference type="PANTHER" id="PTHR11815">
    <property type="entry name" value="SUCCINYL-COA SYNTHETASE BETA CHAIN"/>
    <property type="match status" value="1"/>
</dbReference>
<dbReference type="Pfam" id="PF08442">
    <property type="entry name" value="ATP-grasp_2"/>
    <property type="match status" value="1"/>
</dbReference>
<dbReference type="Pfam" id="PF00549">
    <property type="entry name" value="Ligase_CoA"/>
    <property type="match status" value="1"/>
</dbReference>
<dbReference type="PIRSF" id="PIRSF001554">
    <property type="entry name" value="SucCS_beta"/>
    <property type="match status" value="1"/>
</dbReference>
<dbReference type="SUPFAM" id="SSF56059">
    <property type="entry name" value="Glutathione synthetase ATP-binding domain-like"/>
    <property type="match status" value="1"/>
</dbReference>
<dbReference type="SUPFAM" id="SSF52210">
    <property type="entry name" value="Succinyl-CoA synthetase domains"/>
    <property type="match status" value="1"/>
</dbReference>
<dbReference type="PROSITE" id="PS50975">
    <property type="entry name" value="ATP_GRASP"/>
    <property type="match status" value="1"/>
</dbReference>
<dbReference type="PROSITE" id="PS01217">
    <property type="entry name" value="SUCCINYL_COA_LIG_3"/>
    <property type="match status" value="1"/>
</dbReference>
<reference key="1">
    <citation type="journal article" date="2007" name="Genome Res.">
        <title>Reductive evolution and niche adaptation inferred from the genome of Mycobacterium ulcerans, the causative agent of Buruli ulcer.</title>
        <authorList>
            <person name="Stinear T.P."/>
            <person name="Seemann T."/>
            <person name="Pidot S."/>
            <person name="Frigui W."/>
            <person name="Reysset G."/>
            <person name="Garnier T."/>
            <person name="Meurice G."/>
            <person name="Simon D."/>
            <person name="Bouchier C."/>
            <person name="Ma L."/>
            <person name="Tichit M."/>
            <person name="Porter J.L."/>
            <person name="Ryan J."/>
            <person name="Johnson P.D.R."/>
            <person name="Davies J.K."/>
            <person name="Jenkin G.A."/>
            <person name="Small P.L.C."/>
            <person name="Jones L.M."/>
            <person name="Tekaia F."/>
            <person name="Laval F."/>
            <person name="Daffe M."/>
            <person name="Parkhill J."/>
            <person name="Cole S.T."/>
        </authorList>
    </citation>
    <scope>NUCLEOTIDE SEQUENCE [LARGE SCALE GENOMIC DNA]</scope>
    <source>
        <strain>Agy99</strain>
    </source>
</reference>
<proteinExistence type="inferred from homology"/>
<evidence type="ECO:0000255" key="1">
    <source>
        <dbReference type="HAMAP-Rule" id="MF_00558"/>
    </source>
</evidence>
<protein>
    <recommendedName>
        <fullName evidence="1">Succinate--CoA ligase [ADP-forming] subunit beta</fullName>
        <ecNumber evidence="1">6.2.1.5</ecNumber>
    </recommendedName>
    <alternativeName>
        <fullName evidence="1">Succinyl-CoA synthetase subunit beta</fullName>
        <shortName evidence="1">SCS-beta</shortName>
    </alternativeName>
</protein>
<comment type="function">
    <text evidence="1">Succinyl-CoA synthetase functions in the citric acid cycle (TCA), coupling the hydrolysis of succinyl-CoA to the synthesis of either ATP or GTP and thus represents the only step of substrate-level phosphorylation in the TCA. The beta subunit provides nucleotide specificity of the enzyme and binds the substrate succinate, while the binding sites for coenzyme A and phosphate are found in the alpha subunit.</text>
</comment>
<comment type="catalytic activity">
    <reaction evidence="1">
        <text>succinate + ATP + CoA = succinyl-CoA + ADP + phosphate</text>
        <dbReference type="Rhea" id="RHEA:17661"/>
        <dbReference type="ChEBI" id="CHEBI:30031"/>
        <dbReference type="ChEBI" id="CHEBI:30616"/>
        <dbReference type="ChEBI" id="CHEBI:43474"/>
        <dbReference type="ChEBI" id="CHEBI:57287"/>
        <dbReference type="ChEBI" id="CHEBI:57292"/>
        <dbReference type="ChEBI" id="CHEBI:456216"/>
        <dbReference type="EC" id="6.2.1.5"/>
    </reaction>
    <physiologicalReaction direction="right-to-left" evidence="1">
        <dbReference type="Rhea" id="RHEA:17663"/>
    </physiologicalReaction>
</comment>
<comment type="catalytic activity">
    <reaction evidence="1">
        <text>GTP + succinate + CoA = succinyl-CoA + GDP + phosphate</text>
        <dbReference type="Rhea" id="RHEA:22120"/>
        <dbReference type="ChEBI" id="CHEBI:30031"/>
        <dbReference type="ChEBI" id="CHEBI:37565"/>
        <dbReference type="ChEBI" id="CHEBI:43474"/>
        <dbReference type="ChEBI" id="CHEBI:57287"/>
        <dbReference type="ChEBI" id="CHEBI:57292"/>
        <dbReference type="ChEBI" id="CHEBI:58189"/>
    </reaction>
    <physiologicalReaction direction="right-to-left" evidence="1">
        <dbReference type="Rhea" id="RHEA:22122"/>
    </physiologicalReaction>
</comment>
<comment type="cofactor">
    <cofactor evidence="1">
        <name>Mg(2+)</name>
        <dbReference type="ChEBI" id="CHEBI:18420"/>
    </cofactor>
    <text evidence="1">Binds 1 Mg(2+) ion per subunit.</text>
</comment>
<comment type="pathway">
    <text evidence="1">Carbohydrate metabolism; tricarboxylic acid cycle; succinate from succinyl-CoA (ligase route): step 1/1.</text>
</comment>
<comment type="subunit">
    <text evidence="1">Heterotetramer of two alpha and two beta subunits.</text>
</comment>
<comment type="similarity">
    <text evidence="1">Belongs to the succinate/malate CoA ligase beta subunit family.</text>
</comment>